<gene>
    <name evidence="1" type="primary">trmD</name>
    <name type="ordered locus">Dtur_1534</name>
</gene>
<proteinExistence type="inferred from homology"/>
<accession>B8E2G4</accession>
<reference key="1">
    <citation type="journal article" date="2016" name="Front. Microbiol.">
        <title>The complete genome sequence of hyperthermophile Dictyoglomus turgidum DSM 6724 reveals a specialized carbohydrate fermentor.</title>
        <authorList>
            <person name="Brumm P.J."/>
            <person name="Gowda K."/>
            <person name="Robb F.T."/>
            <person name="Mead D.A."/>
        </authorList>
    </citation>
    <scope>NUCLEOTIDE SEQUENCE [LARGE SCALE GENOMIC DNA]</scope>
    <source>
        <strain>DSM 6724 / Z-1310</strain>
    </source>
</reference>
<comment type="function">
    <text evidence="1">Specifically methylates guanosine-37 in various tRNAs.</text>
</comment>
<comment type="catalytic activity">
    <reaction evidence="1">
        <text>guanosine(37) in tRNA + S-adenosyl-L-methionine = N(1)-methylguanosine(37) in tRNA + S-adenosyl-L-homocysteine + H(+)</text>
        <dbReference type="Rhea" id="RHEA:36899"/>
        <dbReference type="Rhea" id="RHEA-COMP:10145"/>
        <dbReference type="Rhea" id="RHEA-COMP:10147"/>
        <dbReference type="ChEBI" id="CHEBI:15378"/>
        <dbReference type="ChEBI" id="CHEBI:57856"/>
        <dbReference type="ChEBI" id="CHEBI:59789"/>
        <dbReference type="ChEBI" id="CHEBI:73542"/>
        <dbReference type="ChEBI" id="CHEBI:74269"/>
        <dbReference type="EC" id="2.1.1.228"/>
    </reaction>
</comment>
<comment type="subunit">
    <text evidence="1">Homodimer.</text>
</comment>
<comment type="subcellular location">
    <subcellularLocation>
        <location evidence="1">Cytoplasm</location>
    </subcellularLocation>
</comment>
<comment type="similarity">
    <text evidence="1">Belongs to the RNA methyltransferase TrmD family.</text>
</comment>
<evidence type="ECO:0000255" key="1">
    <source>
        <dbReference type="HAMAP-Rule" id="MF_00605"/>
    </source>
</evidence>
<protein>
    <recommendedName>
        <fullName evidence="1">tRNA (guanine-N(1)-)-methyltransferase</fullName>
        <ecNumber evidence="1">2.1.1.228</ecNumber>
    </recommendedName>
    <alternativeName>
        <fullName evidence="1">M1G-methyltransferase</fullName>
    </alternativeName>
    <alternativeName>
        <fullName evidence="1">tRNA [GM37] methyltransferase</fullName>
    </alternativeName>
</protein>
<keyword id="KW-0963">Cytoplasm</keyword>
<keyword id="KW-0489">Methyltransferase</keyword>
<keyword id="KW-1185">Reference proteome</keyword>
<keyword id="KW-0949">S-adenosyl-L-methionine</keyword>
<keyword id="KW-0808">Transferase</keyword>
<keyword id="KW-0819">tRNA processing</keyword>
<organism>
    <name type="scientific">Dictyoglomus turgidum (strain DSM 6724 / Z-1310)</name>
    <dbReference type="NCBI Taxonomy" id="515635"/>
    <lineage>
        <taxon>Bacteria</taxon>
        <taxon>Pseudomonadati</taxon>
        <taxon>Dictyoglomota</taxon>
        <taxon>Dictyoglomia</taxon>
        <taxon>Dictyoglomales</taxon>
        <taxon>Dictyoglomaceae</taxon>
        <taxon>Dictyoglomus</taxon>
    </lineage>
</organism>
<dbReference type="EC" id="2.1.1.228" evidence="1"/>
<dbReference type="EMBL" id="CP001251">
    <property type="protein sequence ID" value="ACK42808.1"/>
    <property type="molecule type" value="Genomic_DNA"/>
</dbReference>
<dbReference type="RefSeq" id="WP_012583884.1">
    <property type="nucleotide sequence ID" value="NC_011661.1"/>
</dbReference>
<dbReference type="RefSeq" id="YP_002353422.1">
    <property type="nucleotide sequence ID" value="NC_011661.1"/>
</dbReference>
<dbReference type="SMR" id="B8E2G4"/>
<dbReference type="FunCoup" id="B8E2G4">
    <property type="interactions" value="364"/>
</dbReference>
<dbReference type="STRING" id="515635.Dtur_1534"/>
<dbReference type="EnsemblBacteria" id="ACK42808">
    <property type="protein sequence ID" value="ACK42808"/>
    <property type="gene ID" value="Dtur_1534"/>
</dbReference>
<dbReference type="KEGG" id="dtu:Dtur_1534"/>
<dbReference type="PATRIC" id="fig|515635.4.peg.1583"/>
<dbReference type="eggNOG" id="COG0336">
    <property type="taxonomic scope" value="Bacteria"/>
</dbReference>
<dbReference type="HOGENOM" id="CLU_047363_0_1_0"/>
<dbReference type="InParanoid" id="B8E2G4"/>
<dbReference type="OrthoDB" id="9807416at2"/>
<dbReference type="Proteomes" id="UP000007719">
    <property type="component" value="Chromosome"/>
</dbReference>
<dbReference type="GO" id="GO:0005829">
    <property type="term" value="C:cytosol"/>
    <property type="evidence" value="ECO:0000318"/>
    <property type="project" value="GO_Central"/>
</dbReference>
<dbReference type="GO" id="GO:0052906">
    <property type="term" value="F:tRNA (guanine(37)-N1)-methyltransferase activity"/>
    <property type="evidence" value="ECO:0000318"/>
    <property type="project" value="GO_Central"/>
</dbReference>
<dbReference type="GO" id="GO:0002939">
    <property type="term" value="P:tRNA N1-guanine methylation"/>
    <property type="evidence" value="ECO:0000318"/>
    <property type="project" value="GO_Central"/>
</dbReference>
<dbReference type="CDD" id="cd18080">
    <property type="entry name" value="TrmD-like"/>
    <property type="match status" value="1"/>
</dbReference>
<dbReference type="FunFam" id="1.10.1270.20:FF:000001">
    <property type="entry name" value="tRNA (guanine-N(1)-)-methyltransferase"/>
    <property type="match status" value="1"/>
</dbReference>
<dbReference type="FunFam" id="3.40.1280.10:FF:000001">
    <property type="entry name" value="tRNA (guanine-N(1)-)-methyltransferase"/>
    <property type="match status" value="1"/>
</dbReference>
<dbReference type="Gene3D" id="3.40.1280.10">
    <property type="match status" value="1"/>
</dbReference>
<dbReference type="Gene3D" id="1.10.1270.20">
    <property type="entry name" value="tRNA(m1g37)methyltransferase, domain 2"/>
    <property type="match status" value="1"/>
</dbReference>
<dbReference type="HAMAP" id="MF_00605">
    <property type="entry name" value="TrmD"/>
    <property type="match status" value="1"/>
</dbReference>
<dbReference type="InterPro" id="IPR029028">
    <property type="entry name" value="Alpha/beta_knot_MTases"/>
</dbReference>
<dbReference type="InterPro" id="IPR023148">
    <property type="entry name" value="tRNA_m1G_MeTrfase_C_sf"/>
</dbReference>
<dbReference type="InterPro" id="IPR002649">
    <property type="entry name" value="tRNA_m1G_MeTrfase_TrmD"/>
</dbReference>
<dbReference type="InterPro" id="IPR029026">
    <property type="entry name" value="tRNA_m1G_MTases_N"/>
</dbReference>
<dbReference type="InterPro" id="IPR016009">
    <property type="entry name" value="tRNA_MeTrfase_TRMD/TRM10"/>
</dbReference>
<dbReference type="NCBIfam" id="NF000648">
    <property type="entry name" value="PRK00026.1"/>
    <property type="match status" value="1"/>
</dbReference>
<dbReference type="NCBIfam" id="TIGR00088">
    <property type="entry name" value="trmD"/>
    <property type="match status" value="1"/>
</dbReference>
<dbReference type="PANTHER" id="PTHR46417">
    <property type="entry name" value="TRNA (GUANINE-N(1)-)-METHYLTRANSFERASE"/>
    <property type="match status" value="1"/>
</dbReference>
<dbReference type="PANTHER" id="PTHR46417:SF1">
    <property type="entry name" value="TRNA (GUANINE-N(1)-)-METHYLTRANSFERASE"/>
    <property type="match status" value="1"/>
</dbReference>
<dbReference type="Pfam" id="PF01746">
    <property type="entry name" value="tRNA_m1G_MT"/>
    <property type="match status" value="1"/>
</dbReference>
<dbReference type="PIRSF" id="PIRSF000386">
    <property type="entry name" value="tRNA_mtase"/>
    <property type="match status" value="1"/>
</dbReference>
<dbReference type="SUPFAM" id="SSF75217">
    <property type="entry name" value="alpha/beta knot"/>
    <property type="match status" value="1"/>
</dbReference>
<name>TRMD_DICTD</name>
<sequence>MLRIDIVTIFPEMFKGPFDVSILKKAQDKGLVEIKVYNLRDFTEDKHRTVDDYPYGGGSGMVMKPEPIFKAVRSLKKEDSEVILLSPSGDLFNQKIAEELSKKNHLILICGRYEGVDERVKSIITREISIGDYVLTGGEIPAMVIVDAVVRLVPGVLGDPDSLREESFQWGILEYPQYTHPRDFEGMKVPDILLSGNHERIRRWRRKEALKKTFLKRPDLLEKTSLTQEDLELLEEIKKELREEV</sequence>
<feature type="chain" id="PRO_1000130162" description="tRNA (guanine-N(1)-)-methyltransferase">
    <location>
        <begin position="1"/>
        <end position="245"/>
    </location>
</feature>
<feature type="binding site" evidence="1">
    <location>
        <position position="111"/>
    </location>
    <ligand>
        <name>S-adenosyl-L-methionine</name>
        <dbReference type="ChEBI" id="CHEBI:59789"/>
    </ligand>
</feature>
<feature type="binding site" evidence="1">
    <location>
        <begin position="130"/>
        <end position="135"/>
    </location>
    <ligand>
        <name>S-adenosyl-L-methionine</name>
        <dbReference type="ChEBI" id="CHEBI:59789"/>
    </ligand>
</feature>